<protein>
    <recommendedName>
        <fullName evidence="1">tRNA dimethylallyltransferase</fullName>
        <ecNumber evidence="1">2.5.1.75</ecNumber>
    </recommendedName>
    <alternativeName>
        <fullName evidence="1">Dimethylallyl diphosphate:tRNA dimethylallyltransferase</fullName>
        <shortName evidence="1">DMAPP:tRNA dimethylallyltransferase</shortName>
        <shortName evidence="1">DMATase</shortName>
    </alternativeName>
    <alternativeName>
        <fullName evidence="1">Isopentenyl-diphosphate:tRNA isopentenyltransferase</fullName>
        <shortName evidence="1">IPP transferase</shortName>
        <shortName evidence="1">IPPT</shortName>
        <shortName evidence="1">IPTase</shortName>
    </alternativeName>
</protein>
<organism>
    <name type="scientific">Shigella boydii serotype 18 (strain CDC 3083-94 / BS512)</name>
    <dbReference type="NCBI Taxonomy" id="344609"/>
    <lineage>
        <taxon>Bacteria</taxon>
        <taxon>Pseudomonadati</taxon>
        <taxon>Pseudomonadota</taxon>
        <taxon>Gammaproteobacteria</taxon>
        <taxon>Enterobacterales</taxon>
        <taxon>Enterobacteriaceae</taxon>
        <taxon>Shigella</taxon>
    </lineage>
</organism>
<gene>
    <name evidence="1" type="primary">miaA</name>
    <name type="ordered locus">SbBS512_E4702</name>
</gene>
<name>MIAA_SHIB3</name>
<comment type="function">
    <text evidence="1">Catalyzes the transfer of a dimethylallyl group onto the adenine at position 37 in tRNAs that read codons beginning with uridine, leading to the formation of N6-(dimethylallyl)adenosine (i(6)A).</text>
</comment>
<comment type="catalytic activity">
    <reaction evidence="1">
        <text>adenosine(37) in tRNA + dimethylallyl diphosphate = N(6)-dimethylallyladenosine(37) in tRNA + diphosphate</text>
        <dbReference type="Rhea" id="RHEA:26482"/>
        <dbReference type="Rhea" id="RHEA-COMP:10162"/>
        <dbReference type="Rhea" id="RHEA-COMP:10375"/>
        <dbReference type="ChEBI" id="CHEBI:33019"/>
        <dbReference type="ChEBI" id="CHEBI:57623"/>
        <dbReference type="ChEBI" id="CHEBI:74411"/>
        <dbReference type="ChEBI" id="CHEBI:74415"/>
        <dbReference type="EC" id="2.5.1.75"/>
    </reaction>
</comment>
<comment type="cofactor">
    <cofactor evidence="1">
        <name>Mg(2+)</name>
        <dbReference type="ChEBI" id="CHEBI:18420"/>
    </cofactor>
</comment>
<comment type="subunit">
    <text evidence="1">Monomer.</text>
</comment>
<comment type="similarity">
    <text evidence="1">Belongs to the IPP transferase family.</text>
</comment>
<evidence type="ECO:0000255" key="1">
    <source>
        <dbReference type="HAMAP-Rule" id="MF_00185"/>
    </source>
</evidence>
<reference key="1">
    <citation type="submission" date="2008-05" db="EMBL/GenBank/DDBJ databases">
        <title>Complete sequence of Shigella boydii serotype 18 strain BS512.</title>
        <authorList>
            <person name="Rasko D.A."/>
            <person name="Rosovitz M."/>
            <person name="Maurelli A.T."/>
            <person name="Myers G."/>
            <person name="Seshadri R."/>
            <person name="Cer R."/>
            <person name="Jiang L."/>
            <person name="Ravel J."/>
            <person name="Sebastian Y."/>
        </authorList>
    </citation>
    <scope>NUCLEOTIDE SEQUENCE [LARGE SCALE GENOMIC DNA]</scope>
    <source>
        <strain>CDC 3083-94 / BS512</strain>
    </source>
</reference>
<feature type="chain" id="PRO_1000098688" description="tRNA dimethylallyltransferase">
    <location>
        <begin position="1"/>
        <end position="316"/>
    </location>
</feature>
<feature type="region of interest" description="Interaction with substrate tRNA" evidence="1">
    <location>
        <begin position="42"/>
        <end position="45"/>
    </location>
</feature>
<feature type="region of interest" description="Interaction with substrate tRNA" evidence="1">
    <location>
        <begin position="166"/>
        <end position="170"/>
    </location>
</feature>
<feature type="region of interest" description="Interaction with substrate tRNA" evidence="1">
    <location>
        <begin position="247"/>
        <end position="252"/>
    </location>
</feature>
<feature type="region of interest" description="Interaction with substrate tRNA" evidence="1">
    <location>
        <begin position="280"/>
        <end position="287"/>
    </location>
</feature>
<feature type="binding site" evidence="1">
    <location>
        <begin position="17"/>
        <end position="24"/>
    </location>
    <ligand>
        <name>ATP</name>
        <dbReference type="ChEBI" id="CHEBI:30616"/>
    </ligand>
</feature>
<feature type="binding site" evidence="1">
    <location>
        <begin position="19"/>
        <end position="24"/>
    </location>
    <ligand>
        <name>substrate</name>
    </ligand>
</feature>
<feature type="site" description="Interaction with substrate tRNA" evidence="1">
    <location>
        <position position="108"/>
    </location>
</feature>
<feature type="site" description="Interaction with substrate tRNA" evidence="1">
    <location>
        <position position="130"/>
    </location>
</feature>
<proteinExistence type="inferred from homology"/>
<keyword id="KW-0067">ATP-binding</keyword>
<keyword id="KW-0460">Magnesium</keyword>
<keyword id="KW-0547">Nucleotide-binding</keyword>
<keyword id="KW-1185">Reference proteome</keyword>
<keyword id="KW-0808">Transferase</keyword>
<keyword id="KW-0819">tRNA processing</keyword>
<sequence>MSDISKASLPKAIFLMGPTASGKTALAIELRKILPVELISVDSALIYKGMDIGTAKPNAEELLAVPHRLLDIRDPSQAYSAADFRRDALAEMADITAAGRIPLLVGGTMLYFKALLEGLSPLPSADPEVRARIEQQAAEQGWESLHRQLQEVDPVAAARIHPNDPQRLSRALEVFFISGKTLTELTQTSGDALPYQVHQFAIAPASRELLHQRIEQRFHQMLASGFEAEVRALFARGDLHTDLPSIRCVGYRQMWSYLEGEISYDEMVYRGVCATRQLAKRQITWLRGWEGVHWLDSEKPEQARDEVLQVVGAIAG</sequence>
<accession>B2TY46</accession>
<dbReference type="EC" id="2.5.1.75" evidence="1"/>
<dbReference type="EMBL" id="CP001063">
    <property type="protein sequence ID" value="ACD10406.1"/>
    <property type="molecule type" value="Genomic_DNA"/>
</dbReference>
<dbReference type="RefSeq" id="WP_001280361.1">
    <property type="nucleotide sequence ID" value="NC_010658.1"/>
</dbReference>
<dbReference type="SMR" id="B2TY46"/>
<dbReference type="STRING" id="344609.SbBS512_E4702"/>
<dbReference type="KEGG" id="sbc:SbBS512_E4702"/>
<dbReference type="HOGENOM" id="CLU_032616_0_0_6"/>
<dbReference type="Proteomes" id="UP000001030">
    <property type="component" value="Chromosome"/>
</dbReference>
<dbReference type="GO" id="GO:0005524">
    <property type="term" value="F:ATP binding"/>
    <property type="evidence" value="ECO:0007669"/>
    <property type="project" value="UniProtKB-UniRule"/>
</dbReference>
<dbReference type="GO" id="GO:0052381">
    <property type="term" value="F:tRNA dimethylallyltransferase activity"/>
    <property type="evidence" value="ECO:0007669"/>
    <property type="project" value="UniProtKB-UniRule"/>
</dbReference>
<dbReference type="GO" id="GO:0006400">
    <property type="term" value="P:tRNA modification"/>
    <property type="evidence" value="ECO:0007669"/>
    <property type="project" value="TreeGrafter"/>
</dbReference>
<dbReference type="FunFam" id="1.10.20.140:FF:000001">
    <property type="entry name" value="tRNA dimethylallyltransferase"/>
    <property type="match status" value="1"/>
</dbReference>
<dbReference type="FunFam" id="1.10.287.890:FF:000001">
    <property type="entry name" value="tRNA dimethylallyltransferase"/>
    <property type="match status" value="1"/>
</dbReference>
<dbReference type="Gene3D" id="1.10.20.140">
    <property type="match status" value="1"/>
</dbReference>
<dbReference type="Gene3D" id="1.10.287.890">
    <property type="entry name" value="Crystal structure of tRNA isopentenylpyrophosphate transferase (bh2366) domain"/>
    <property type="match status" value="1"/>
</dbReference>
<dbReference type="Gene3D" id="3.40.50.300">
    <property type="entry name" value="P-loop containing nucleotide triphosphate hydrolases"/>
    <property type="match status" value="1"/>
</dbReference>
<dbReference type="HAMAP" id="MF_00185">
    <property type="entry name" value="IPP_trans"/>
    <property type="match status" value="1"/>
</dbReference>
<dbReference type="InterPro" id="IPR039657">
    <property type="entry name" value="Dimethylallyltransferase"/>
</dbReference>
<dbReference type="InterPro" id="IPR018022">
    <property type="entry name" value="IPT"/>
</dbReference>
<dbReference type="InterPro" id="IPR027417">
    <property type="entry name" value="P-loop_NTPase"/>
</dbReference>
<dbReference type="NCBIfam" id="TIGR00174">
    <property type="entry name" value="miaA"/>
    <property type="match status" value="1"/>
</dbReference>
<dbReference type="PANTHER" id="PTHR11088">
    <property type="entry name" value="TRNA DIMETHYLALLYLTRANSFERASE"/>
    <property type="match status" value="1"/>
</dbReference>
<dbReference type="PANTHER" id="PTHR11088:SF60">
    <property type="entry name" value="TRNA DIMETHYLALLYLTRANSFERASE"/>
    <property type="match status" value="1"/>
</dbReference>
<dbReference type="Pfam" id="PF01715">
    <property type="entry name" value="IPPT"/>
    <property type="match status" value="1"/>
</dbReference>
<dbReference type="SUPFAM" id="SSF52540">
    <property type="entry name" value="P-loop containing nucleoside triphosphate hydrolases"/>
    <property type="match status" value="1"/>
</dbReference>